<proteinExistence type="inferred from homology"/>
<gene>
    <name evidence="1" type="primary">cobS</name>
    <name type="ordered locus">slr0636</name>
</gene>
<comment type="function">
    <text evidence="1">Joins adenosylcobinamide-GDP and alpha-ribazole to generate adenosylcobalamin (Ado-cobalamin). Also synthesizes adenosylcobalamin 5'-phosphate from adenosylcobinamide-GDP and alpha-ribazole 5'-phosphate.</text>
</comment>
<comment type="catalytic activity">
    <reaction evidence="1">
        <text>alpha-ribazole + adenosylcob(III)inamide-GDP = adenosylcob(III)alamin + GMP + H(+)</text>
        <dbReference type="Rhea" id="RHEA:16049"/>
        <dbReference type="ChEBI" id="CHEBI:10329"/>
        <dbReference type="ChEBI" id="CHEBI:15378"/>
        <dbReference type="ChEBI" id="CHEBI:18408"/>
        <dbReference type="ChEBI" id="CHEBI:58115"/>
        <dbReference type="ChEBI" id="CHEBI:60487"/>
        <dbReference type="EC" id="2.7.8.26"/>
    </reaction>
</comment>
<comment type="catalytic activity">
    <reaction evidence="1">
        <text>alpha-ribazole 5'-phosphate + adenosylcob(III)inamide-GDP = adenosylcob(III)alamin 5'-phosphate + GMP + H(+)</text>
        <dbReference type="Rhea" id="RHEA:23560"/>
        <dbReference type="ChEBI" id="CHEBI:15378"/>
        <dbReference type="ChEBI" id="CHEBI:57918"/>
        <dbReference type="ChEBI" id="CHEBI:58115"/>
        <dbReference type="ChEBI" id="CHEBI:60487"/>
        <dbReference type="ChEBI" id="CHEBI:60493"/>
        <dbReference type="EC" id="2.7.8.26"/>
    </reaction>
</comment>
<comment type="cofactor">
    <cofactor evidence="1">
        <name>Mg(2+)</name>
        <dbReference type="ChEBI" id="CHEBI:18420"/>
    </cofactor>
</comment>
<comment type="pathway">
    <text evidence="1">Cofactor biosynthesis; adenosylcobalamin biosynthesis; adenosylcobalamin from cob(II)yrinate a,c-diamide: step 7/7.</text>
</comment>
<comment type="subcellular location">
    <subcellularLocation>
        <location evidence="1">Cell inner membrane</location>
        <topology evidence="1">Multi-pass membrane protein</topology>
    </subcellularLocation>
</comment>
<comment type="similarity">
    <text evidence="1">Belongs to the CobS family.</text>
</comment>
<keyword id="KW-0997">Cell inner membrane</keyword>
<keyword id="KW-1003">Cell membrane</keyword>
<keyword id="KW-0169">Cobalamin biosynthesis</keyword>
<keyword id="KW-0460">Magnesium</keyword>
<keyword id="KW-0472">Membrane</keyword>
<keyword id="KW-1185">Reference proteome</keyword>
<keyword id="KW-0808">Transferase</keyword>
<keyword id="KW-0812">Transmembrane</keyword>
<keyword id="KW-1133">Transmembrane helix</keyword>
<organism>
    <name type="scientific">Synechocystis sp. (strain ATCC 27184 / PCC 6803 / Kazusa)</name>
    <dbReference type="NCBI Taxonomy" id="1111708"/>
    <lineage>
        <taxon>Bacteria</taxon>
        <taxon>Bacillati</taxon>
        <taxon>Cyanobacteriota</taxon>
        <taxon>Cyanophyceae</taxon>
        <taxon>Synechococcales</taxon>
        <taxon>Merismopediaceae</taxon>
        <taxon>Synechocystis</taxon>
    </lineage>
</organism>
<feature type="chain" id="PRO_0000146900" description="Adenosylcobinamide-GDP ribazoletransferase">
    <location>
        <begin position="1"/>
        <end position="260"/>
    </location>
</feature>
<feature type="transmembrane region" description="Helical" evidence="1">
    <location>
        <begin position="7"/>
        <end position="27"/>
    </location>
</feature>
<feature type="transmembrane region" description="Helical" evidence="1">
    <location>
        <begin position="45"/>
        <end position="65"/>
    </location>
</feature>
<feature type="transmembrane region" description="Helical" evidence="1">
    <location>
        <begin position="117"/>
        <end position="137"/>
    </location>
</feature>
<feature type="transmembrane region" description="Helical" evidence="1">
    <location>
        <begin position="145"/>
        <end position="165"/>
    </location>
</feature>
<feature type="transmembrane region" description="Helical" evidence="1">
    <location>
        <begin position="187"/>
        <end position="207"/>
    </location>
</feature>
<feature type="transmembrane region" description="Helical" evidence="1">
    <location>
        <begin position="210"/>
        <end position="230"/>
    </location>
</feature>
<dbReference type="EC" id="2.7.8.26" evidence="1"/>
<dbReference type="EMBL" id="BA000022">
    <property type="protein sequence ID" value="BAA10355.1"/>
    <property type="molecule type" value="Genomic_DNA"/>
</dbReference>
<dbReference type="PIR" id="S76509">
    <property type="entry name" value="S76509"/>
</dbReference>
<dbReference type="STRING" id="1148.gene:10499856"/>
<dbReference type="PaxDb" id="1148-1001624"/>
<dbReference type="EnsemblBacteria" id="BAA10355">
    <property type="protein sequence ID" value="BAA10355"/>
    <property type="gene ID" value="BAA10355"/>
</dbReference>
<dbReference type="KEGG" id="syn:slr0636"/>
<dbReference type="eggNOG" id="COG0368">
    <property type="taxonomic scope" value="Bacteria"/>
</dbReference>
<dbReference type="InParanoid" id="Q55714"/>
<dbReference type="PhylomeDB" id="Q55714"/>
<dbReference type="UniPathway" id="UPA00148">
    <property type="reaction ID" value="UER00238"/>
</dbReference>
<dbReference type="Proteomes" id="UP000001425">
    <property type="component" value="Chromosome"/>
</dbReference>
<dbReference type="GO" id="GO:0005886">
    <property type="term" value="C:plasma membrane"/>
    <property type="evidence" value="ECO:0007669"/>
    <property type="project" value="UniProtKB-SubCell"/>
</dbReference>
<dbReference type="GO" id="GO:0051073">
    <property type="term" value="F:adenosylcobinamide-GDP ribazoletransferase activity"/>
    <property type="evidence" value="ECO:0007669"/>
    <property type="project" value="UniProtKB-UniRule"/>
</dbReference>
<dbReference type="GO" id="GO:0008818">
    <property type="term" value="F:cobalamin 5'-phosphate synthase activity"/>
    <property type="evidence" value="ECO:0007669"/>
    <property type="project" value="UniProtKB-UniRule"/>
</dbReference>
<dbReference type="GO" id="GO:0009236">
    <property type="term" value="P:cobalamin biosynthetic process"/>
    <property type="evidence" value="ECO:0000318"/>
    <property type="project" value="GO_Central"/>
</dbReference>
<dbReference type="HAMAP" id="MF_00719">
    <property type="entry name" value="CobS"/>
    <property type="match status" value="1"/>
</dbReference>
<dbReference type="InterPro" id="IPR003805">
    <property type="entry name" value="CobS"/>
</dbReference>
<dbReference type="NCBIfam" id="TIGR00317">
    <property type="entry name" value="cobS"/>
    <property type="match status" value="1"/>
</dbReference>
<dbReference type="PANTHER" id="PTHR34148">
    <property type="entry name" value="ADENOSYLCOBINAMIDE-GDP RIBAZOLETRANSFERASE"/>
    <property type="match status" value="1"/>
</dbReference>
<dbReference type="PANTHER" id="PTHR34148:SF1">
    <property type="entry name" value="ADENOSYLCOBINAMIDE-GDP RIBAZOLETRANSFERASE"/>
    <property type="match status" value="1"/>
</dbReference>
<dbReference type="Pfam" id="PF02654">
    <property type="entry name" value="CobS"/>
    <property type="match status" value="1"/>
</dbReference>
<reference key="1">
    <citation type="journal article" date="1995" name="DNA Res.">
        <title>Sequence analysis of the genome of the unicellular cyanobacterium Synechocystis sp. strain PCC6803. I. Sequence features in the 1 Mb region from map positions 64% to 92% of the genome.</title>
        <authorList>
            <person name="Kaneko T."/>
            <person name="Tanaka A."/>
            <person name="Sato S."/>
            <person name="Kotani H."/>
            <person name="Sazuka T."/>
            <person name="Miyajima N."/>
            <person name="Sugiura M."/>
            <person name="Tabata S."/>
        </authorList>
    </citation>
    <scope>NUCLEOTIDE SEQUENCE [LARGE SCALE GENOMIC DNA]</scope>
    <source>
        <strain>ATCC 27184 / PCC 6803 / N-1</strain>
    </source>
</reference>
<reference key="2">
    <citation type="journal article" date="1996" name="DNA Res.">
        <title>Sequence analysis of the genome of the unicellular cyanobacterium Synechocystis sp. strain PCC6803. II. Sequence determination of the entire genome and assignment of potential protein-coding regions.</title>
        <authorList>
            <person name="Kaneko T."/>
            <person name="Sato S."/>
            <person name="Kotani H."/>
            <person name="Tanaka A."/>
            <person name="Asamizu E."/>
            <person name="Nakamura Y."/>
            <person name="Miyajima N."/>
            <person name="Hirosawa M."/>
            <person name="Sugiura M."/>
            <person name="Sasamoto S."/>
            <person name="Kimura T."/>
            <person name="Hosouchi T."/>
            <person name="Matsuno A."/>
            <person name="Muraki A."/>
            <person name="Nakazaki N."/>
            <person name="Naruo K."/>
            <person name="Okumura S."/>
            <person name="Shimpo S."/>
            <person name="Takeuchi C."/>
            <person name="Wada T."/>
            <person name="Watanabe A."/>
            <person name="Yamada M."/>
            <person name="Yasuda M."/>
            <person name="Tabata S."/>
        </authorList>
    </citation>
    <scope>NUCLEOTIDE SEQUENCE [LARGE SCALE GENOMIC DNA]</scope>
    <source>
        <strain>ATCC 27184 / PCC 6803 / Kazusa</strain>
    </source>
</reference>
<accession>Q55714</accession>
<name>COBS_SYNY3</name>
<evidence type="ECO:0000255" key="1">
    <source>
        <dbReference type="HAMAP-Rule" id="MF_00719"/>
    </source>
</evidence>
<protein>
    <recommendedName>
        <fullName evidence="1">Adenosylcobinamide-GDP ribazoletransferase</fullName>
        <ecNumber evidence="1">2.7.8.26</ecNumber>
    </recommendedName>
    <alternativeName>
        <fullName evidence="1">Cobalamin synthase</fullName>
    </alternativeName>
    <alternativeName>
        <fullName evidence="1">Cobalamin-5'-phosphate synthase</fullName>
    </alternativeName>
</protein>
<sequence>MEWWRRWYFLWGGDSVGAAILFYTRLPWPPSWPVNFDRIARWITLMGLLLSLILLALDRGLHWLGMDNLLQSAVVVSLWLALTGGLHLDGVADTADGLAVTNPSKRLAVMQDSYTGAYGVMAIAVVLLLKTFALASFSDHGLASWALIMALGWGRWGQLLAIALYPYLRENGKGAMHKRNLKLRPDLLLGTMIIVFGGVGMGYALAIEPWLILGATGSSALIAWAVGRWFAQQFKGHTGDTYGAVVEWSEVLILLGLSLV</sequence>